<comment type="function">
    <text evidence="2">Plays an essential role in viral RNA transcription and replication by forming the heterotrimeric polymerase complex together with PB1 and PB2 subunits. The complex transcribes viral mRNAs by using a unique mechanism called cap-snatching. It consists in the hijacking and cleavage of host capped pre-mRNAs. These short capped RNAs are then used as primers for viral mRNAs. The PB2 subunit is responsible for the binding of the 5' cap of cellular pre-mRNAs which are subsequently cleaved after 10-13 nucleotides by the PA subunit that carries the endonuclease activity.</text>
</comment>
<comment type="cofactor">
    <cofactor evidence="2">
        <name>Mn(2+)</name>
        <dbReference type="ChEBI" id="CHEBI:29035"/>
    </cofactor>
    <text evidence="2">Binds 2 manganese ions per subunit.</text>
</comment>
<comment type="subunit">
    <text evidence="1 2">Influenza RNA polymerase is composed of three subunits: PB1, PB2 and PA. Interacts (via C-terminus) with PB1 (via N-terminus).</text>
</comment>
<comment type="subcellular location">
    <subcellularLocation>
        <location evidence="2">Host cytoplasm</location>
    </subcellularLocation>
    <subcellularLocation>
        <location evidence="2">Host nucleus</location>
    </subcellularLocation>
    <text evidence="1 2">PB1 and PA are transported in the host nucleus as a complex.</text>
</comment>
<comment type="alternative products">
    <event type="ribosomal frameshifting"/>
    <isoform>
        <id>Q6XU35-1</id>
        <name>PA</name>
        <sequence type="displayed"/>
    </isoform>
    <isoform>
        <id>P0DJV4-1</id>
        <name>PA-X</name>
        <sequence type="external"/>
    </isoform>
</comment>
<comment type="PTM">
    <text evidence="1 2">Phosphorylated on serines and threonines by host kinases, including human casein kinase II.</text>
</comment>
<comment type="similarity">
    <text evidence="2">Belongs to the influenza viruses PA family.</text>
</comment>
<gene>
    <name evidence="2" type="primary">PA</name>
</gene>
<organism>
    <name type="scientific">Influenza A virus (strain A/Tokyo/3/1967 H2N2)</name>
    <dbReference type="NCBI Taxonomy" id="380960"/>
    <lineage>
        <taxon>Viruses</taxon>
        <taxon>Riboviria</taxon>
        <taxon>Orthornavirae</taxon>
        <taxon>Negarnaviricota</taxon>
        <taxon>Polyploviricotina</taxon>
        <taxon>Insthoviricetes</taxon>
        <taxon>Articulavirales</taxon>
        <taxon>Orthomyxoviridae</taxon>
        <taxon>Alphainfluenzavirus</taxon>
        <taxon>Alphainfluenzavirus influenzae</taxon>
        <taxon>Influenza A virus</taxon>
    </lineage>
</organism>
<reference key="1">
    <citation type="journal article" date="2004" name="Virology">
        <title>Genetic analysis of human H2N2 and early H3N2 influenza viruses, 1957-1972: evidence for genetic divergence and multiple reassortment events.</title>
        <authorList>
            <person name="Lindstrom S.E."/>
            <person name="Cox N.J."/>
            <person name="Klimov A."/>
        </authorList>
    </citation>
    <scope>NUCLEOTIDE SEQUENCE [GENOMIC RNA]</scope>
</reference>
<name>PA_I67A0</name>
<organismHost>
    <name type="scientific">Aves</name>
    <dbReference type="NCBI Taxonomy" id="8782"/>
</organismHost>
<organismHost>
    <name type="scientific">Homo sapiens</name>
    <name type="common">Human</name>
    <dbReference type="NCBI Taxonomy" id="9606"/>
</organismHost>
<proteinExistence type="inferred from homology"/>
<feature type="chain" id="PRO_0000279265" description="Polymerase acidic protein">
    <location>
        <begin position="1"/>
        <end position="716"/>
    </location>
</feature>
<feature type="short sequence motif" description="Nuclear localization signal 1 (NLS1)" evidence="1 2">
    <location>
        <begin position="124"/>
        <end position="139"/>
    </location>
</feature>
<feature type="short sequence motif" description="Nuclear localization signal 2 (NLS2)" evidence="1 2">
    <location>
        <begin position="184"/>
        <end position="247"/>
    </location>
</feature>
<feature type="binding site" evidence="2">
    <location>
        <position position="41"/>
    </location>
    <ligand>
        <name>Mn(2+)</name>
        <dbReference type="ChEBI" id="CHEBI:29035"/>
        <label>1</label>
    </ligand>
</feature>
<feature type="binding site" evidence="2">
    <location>
        <position position="80"/>
    </location>
    <ligand>
        <name>Mn(2+)</name>
        <dbReference type="ChEBI" id="CHEBI:29035"/>
        <label>2</label>
    </ligand>
</feature>
<feature type="binding site" evidence="2">
    <location>
        <position position="108"/>
    </location>
    <ligand>
        <name>Mn(2+)</name>
        <dbReference type="ChEBI" id="CHEBI:29035"/>
        <label>1</label>
    </ligand>
</feature>
<feature type="binding site" evidence="2">
    <location>
        <position position="108"/>
    </location>
    <ligand>
        <name>Mn(2+)</name>
        <dbReference type="ChEBI" id="CHEBI:29035"/>
        <label>2</label>
    </ligand>
</feature>
<feature type="binding site" evidence="2">
    <location>
        <position position="119"/>
    </location>
    <ligand>
        <name>Mn(2+)</name>
        <dbReference type="ChEBI" id="CHEBI:29035"/>
        <label>1</label>
    </ligand>
</feature>
<feature type="binding site" evidence="2">
    <location>
        <position position="120"/>
    </location>
    <ligand>
        <name>Mn(2+)</name>
        <dbReference type="ChEBI" id="CHEBI:29035"/>
        <label>1</label>
    </ligand>
</feature>
<keyword id="KW-1157">Cap snatching</keyword>
<keyword id="KW-0255">Endonuclease</keyword>
<keyword id="KW-1262">Eukaryotic host gene expression shutoff by virus</keyword>
<keyword id="KW-1191">Eukaryotic host transcription shutoff by virus</keyword>
<keyword id="KW-1035">Host cytoplasm</keyword>
<keyword id="KW-1190">Host gene expression shutoff by virus</keyword>
<keyword id="KW-1048">Host nucleus</keyword>
<keyword id="KW-0945">Host-virus interaction</keyword>
<keyword id="KW-0378">Hydrolase</keyword>
<keyword id="KW-1104">Inhibition of host RNA polymerase II by virus</keyword>
<keyword id="KW-0464">Manganese</keyword>
<keyword id="KW-0479">Metal-binding</keyword>
<keyword id="KW-0540">Nuclease</keyword>
<keyword id="KW-0597">Phosphoprotein</keyword>
<keyword id="KW-0688">Ribosomal frameshifting</keyword>
<dbReference type="EC" id="3.1.-.-" evidence="2"/>
<dbReference type="EMBL" id="AY210006">
    <property type="protein sequence ID" value="AAO46322.1"/>
    <property type="molecule type" value="Genomic_RNA"/>
</dbReference>
<dbReference type="SMR" id="Q6XU35"/>
<dbReference type="MEROPS" id="S62.001"/>
<dbReference type="GO" id="GO:0030430">
    <property type="term" value="C:host cell cytoplasm"/>
    <property type="evidence" value="ECO:0007669"/>
    <property type="project" value="UniProtKB-SubCell"/>
</dbReference>
<dbReference type="GO" id="GO:0042025">
    <property type="term" value="C:host cell nucleus"/>
    <property type="evidence" value="ECO:0007669"/>
    <property type="project" value="UniProtKB-SubCell"/>
</dbReference>
<dbReference type="GO" id="GO:0004519">
    <property type="term" value="F:endonuclease activity"/>
    <property type="evidence" value="ECO:0007669"/>
    <property type="project" value="UniProtKB-KW"/>
</dbReference>
<dbReference type="GO" id="GO:0046872">
    <property type="term" value="F:metal ion binding"/>
    <property type="evidence" value="ECO:0007669"/>
    <property type="project" value="UniProtKB-KW"/>
</dbReference>
<dbReference type="GO" id="GO:0003723">
    <property type="term" value="F:RNA binding"/>
    <property type="evidence" value="ECO:0007669"/>
    <property type="project" value="UniProtKB-UniRule"/>
</dbReference>
<dbReference type="GO" id="GO:0075526">
    <property type="term" value="P:cap snatching"/>
    <property type="evidence" value="ECO:0007669"/>
    <property type="project" value="UniProtKB-UniRule"/>
</dbReference>
<dbReference type="GO" id="GO:0006351">
    <property type="term" value="P:DNA-templated transcription"/>
    <property type="evidence" value="ECO:0007669"/>
    <property type="project" value="UniProtKB-UniRule"/>
</dbReference>
<dbReference type="GO" id="GO:0039657">
    <property type="term" value="P:symbiont-mediated suppression of host gene expression"/>
    <property type="evidence" value="ECO:0007669"/>
    <property type="project" value="UniProtKB-KW"/>
</dbReference>
<dbReference type="GO" id="GO:0039523">
    <property type="term" value="P:symbiont-mediated suppression of host mRNA transcription via inhibition of RNA polymerase II activity"/>
    <property type="evidence" value="ECO:0007669"/>
    <property type="project" value="UniProtKB-UniRule"/>
</dbReference>
<dbReference type="GO" id="GO:0039694">
    <property type="term" value="P:viral RNA genome replication"/>
    <property type="evidence" value="ECO:0007669"/>
    <property type="project" value="InterPro"/>
</dbReference>
<dbReference type="GO" id="GO:0075523">
    <property type="term" value="P:viral translational frameshifting"/>
    <property type="evidence" value="ECO:0007669"/>
    <property type="project" value="UniProtKB-KW"/>
</dbReference>
<dbReference type="FunFam" id="3.40.91.90:FF:000001">
    <property type="entry name" value="Polymerase acidic protein"/>
    <property type="match status" value="1"/>
</dbReference>
<dbReference type="Gene3D" id="3.40.91.90">
    <property type="entry name" value="Influenza RNA-dependent RNA polymerase subunit PA, endonuclease domain"/>
    <property type="match status" value="1"/>
</dbReference>
<dbReference type="HAMAP" id="MF_04063">
    <property type="entry name" value="INFV_PA"/>
    <property type="match status" value="1"/>
</dbReference>
<dbReference type="InterPro" id="IPR037534">
    <property type="entry name" value="INFV_PA"/>
</dbReference>
<dbReference type="InterPro" id="IPR001009">
    <property type="entry name" value="PA/PA-X"/>
</dbReference>
<dbReference type="InterPro" id="IPR038372">
    <property type="entry name" value="PA/PA-X_sf"/>
</dbReference>
<dbReference type="Pfam" id="PF00603">
    <property type="entry name" value="Flu_PA"/>
    <property type="match status" value="1"/>
</dbReference>
<accession>Q6XU35</accession>
<sequence>MEDFVRQCFNPMIVELAEKAMKEYGEDLKIETNKFAAICTHLEVCFMYSDFHFINEQGESIVVELDDPNALLKHRFEIIEGRDRTMAWTVVNSICNTTGAEKPKFLPDLYDYKENRFIEIGVTRREVHIYYLEKANKIKSENTHIHIFSFTGEEMATKADYTLDEESRARIKTRLFTIRQEMANRGLWDSFRQSERGEETIEERFEITGTMRRLADQSLPPNFSCLENFRAYVDGFEPNGYIEGKLSQMSKEVNAKIEPFLKTTPRPIRLPDGPPCFQRSKFLLMDALKLSIEDPSHEGEGIPLYDAIKCMRTFFGWKEPYIVKPHEKGINPNYLLSWKQVLAELQDIENEEKIPRTKNMKKTSQLKWALGENMAPEKVDFDNCRDISDLKQYDSDEPELRSLSSWIQNEFNKACELTDSTWIELDEIGEDVAPIEYIASMRRNYFTAEVSHCRATEYIMKGVYINTALLNASCAAMDDFQLIPMISKCRTKEGRRKTNLYGFIIKGRSHLRNDTDVVNFVSMEFSLTDPRLEPHKWEKYCVLEIGDMLLRSAIGQMSRPMFLYVRTNGTSKIKMKWGMEMRRCLLQSLQQIESMIEAESSVKEKDMTKEFFENKSETWPIGESPKGVEDGSIGKVCRTLLAKSVFNSLYASPQLEGFSAESRKLLLVVQALRDNLEPGTFDLGGLYEAIEECLINDPWVLLNASWFNSFLTHALR</sequence>
<evidence type="ECO:0000250" key="1">
    <source>
        <dbReference type="UniProtKB" id="P03433"/>
    </source>
</evidence>
<evidence type="ECO:0000255" key="2">
    <source>
        <dbReference type="HAMAP-Rule" id="MF_04063"/>
    </source>
</evidence>
<protein>
    <recommendedName>
        <fullName evidence="2">Polymerase acidic protein</fullName>
        <ecNumber evidence="2">3.1.-.-</ecNumber>
    </recommendedName>
    <alternativeName>
        <fullName evidence="2">RNA-directed RNA polymerase subunit P2</fullName>
    </alternativeName>
</protein>